<organism>
    <name type="scientific">Clostridium beijerinckii (strain ATCC 51743 / NCIMB 8052)</name>
    <name type="common">Clostridium acetobutylicum</name>
    <dbReference type="NCBI Taxonomy" id="290402"/>
    <lineage>
        <taxon>Bacteria</taxon>
        <taxon>Bacillati</taxon>
        <taxon>Bacillota</taxon>
        <taxon>Clostridia</taxon>
        <taxon>Eubacteriales</taxon>
        <taxon>Clostridiaceae</taxon>
        <taxon>Clostridium</taxon>
    </lineage>
</organism>
<feature type="chain" id="PRO_0000386809" description="Ribosomal RNA small subunit methyltransferase H">
    <location>
        <begin position="1"/>
        <end position="310"/>
    </location>
</feature>
<feature type="binding site" evidence="1">
    <location>
        <begin position="33"/>
        <end position="35"/>
    </location>
    <ligand>
        <name>S-adenosyl-L-methionine</name>
        <dbReference type="ChEBI" id="CHEBI:59789"/>
    </ligand>
</feature>
<feature type="binding site" evidence="1">
    <location>
        <position position="53"/>
    </location>
    <ligand>
        <name>S-adenosyl-L-methionine</name>
        <dbReference type="ChEBI" id="CHEBI:59789"/>
    </ligand>
</feature>
<feature type="binding site" evidence="1">
    <location>
        <position position="79"/>
    </location>
    <ligand>
        <name>S-adenosyl-L-methionine</name>
        <dbReference type="ChEBI" id="CHEBI:59789"/>
    </ligand>
</feature>
<feature type="binding site" evidence="1">
    <location>
        <position position="100"/>
    </location>
    <ligand>
        <name>S-adenosyl-L-methionine</name>
        <dbReference type="ChEBI" id="CHEBI:59789"/>
    </ligand>
</feature>
<feature type="binding site" evidence="1">
    <location>
        <position position="107"/>
    </location>
    <ligand>
        <name>S-adenosyl-L-methionine</name>
        <dbReference type="ChEBI" id="CHEBI:59789"/>
    </ligand>
</feature>
<comment type="function">
    <text evidence="1">Specifically methylates the N4 position of cytidine in position 1402 (C1402) of 16S rRNA.</text>
</comment>
<comment type="catalytic activity">
    <reaction evidence="1">
        <text>cytidine(1402) in 16S rRNA + S-adenosyl-L-methionine = N(4)-methylcytidine(1402) in 16S rRNA + S-adenosyl-L-homocysteine + H(+)</text>
        <dbReference type="Rhea" id="RHEA:42928"/>
        <dbReference type="Rhea" id="RHEA-COMP:10286"/>
        <dbReference type="Rhea" id="RHEA-COMP:10287"/>
        <dbReference type="ChEBI" id="CHEBI:15378"/>
        <dbReference type="ChEBI" id="CHEBI:57856"/>
        <dbReference type="ChEBI" id="CHEBI:59789"/>
        <dbReference type="ChEBI" id="CHEBI:74506"/>
        <dbReference type="ChEBI" id="CHEBI:82748"/>
        <dbReference type="EC" id="2.1.1.199"/>
    </reaction>
</comment>
<comment type="subcellular location">
    <subcellularLocation>
        <location evidence="1">Cytoplasm</location>
    </subcellularLocation>
</comment>
<comment type="similarity">
    <text evidence="1">Belongs to the methyltransferase superfamily. RsmH family.</text>
</comment>
<dbReference type="EC" id="2.1.1.199" evidence="1"/>
<dbReference type="EMBL" id="CP000721">
    <property type="protein sequence ID" value="ABR33750.1"/>
    <property type="molecule type" value="Genomic_DNA"/>
</dbReference>
<dbReference type="RefSeq" id="WP_011968902.1">
    <property type="nucleotide sequence ID" value="NC_009617.1"/>
</dbReference>
<dbReference type="SMR" id="A6LTS0"/>
<dbReference type="GeneID" id="66344544"/>
<dbReference type="KEGG" id="cbe:Cbei_1576"/>
<dbReference type="eggNOG" id="COG0275">
    <property type="taxonomic scope" value="Bacteria"/>
</dbReference>
<dbReference type="HOGENOM" id="CLU_038422_2_0_9"/>
<dbReference type="Proteomes" id="UP000000565">
    <property type="component" value="Chromosome"/>
</dbReference>
<dbReference type="GO" id="GO:0005737">
    <property type="term" value="C:cytoplasm"/>
    <property type="evidence" value="ECO:0007669"/>
    <property type="project" value="UniProtKB-SubCell"/>
</dbReference>
<dbReference type="GO" id="GO:0071424">
    <property type="term" value="F:rRNA (cytosine-N4-)-methyltransferase activity"/>
    <property type="evidence" value="ECO:0007669"/>
    <property type="project" value="UniProtKB-UniRule"/>
</dbReference>
<dbReference type="GO" id="GO:0070475">
    <property type="term" value="P:rRNA base methylation"/>
    <property type="evidence" value="ECO:0007669"/>
    <property type="project" value="UniProtKB-UniRule"/>
</dbReference>
<dbReference type="FunFam" id="1.10.150.170:FF:000001">
    <property type="entry name" value="Ribosomal RNA small subunit methyltransferase H"/>
    <property type="match status" value="1"/>
</dbReference>
<dbReference type="Gene3D" id="1.10.150.170">
    <property type="entry name" value="Putative methyltransferase TM0872, insert domain"/>
    <property type="match status" value="1"/>
</dbReference>
<dbReference type="Gene3D" id="3.40.50.150">
    <property type="entry name" value="Vaccinia Virus protein VP39"/>
    <property type="match status" value="1"/>
</dbReference>
<dbReference type="HAMAP" id="MF_01007">
    <property type="entry name" value="16SrRNA_methyltr_H"/>
    <property type="match status" value="1"/>
</dbReference>
<dbReference type="InterPro" id="IPR002903">
    <property type="entry name" value="RsmH"/>
</dbReference>
<dbReference type="InterPro" id="IPR023397">
    <property type="entry name" value="SAM-dep_MeTrfase_MraW_recog"/>
</dbReference>
<dbReference type="InterPro" id="IPR029063">
    <property type="entry name" value="SAM-dependent_MTases_sf"/>
</dbReference>
<dbReference type="NCBIfam" id="TIGR00006">
    <property type="entry name" value="16S rRNA (cytosine(1402)-N(4))-methyltransferase RsmH"/>
    <property type="match status" value="1"/>
</dbReference>
<dbReference type="PANTHER" id="PTHR11265:SF0">
    <property type="entry name" value="12S RRNA N4-METHYLCYTIDINE METHYLTRANSFERASE"/>
    <property type="match status" value="1"/>
</dbReference>
<dbReference type="PANTHER" id="PTHR11265">
    <property type="entry name" value="S-ADENOSYL-METHYLTRANSFERASE MRAW"/>
    <property type="match status" value="1"/>
</dbReference>
<dbReference type="Pfam" id="PF01795">
    <property type="entry name" value="Methyltransf_5"/>
    <property type="match status" value="1"/>
</dbReference>
<dbReference type="PIRSF" id="PIRSF004486">
    <property type="entry name" value="MraW"/>
    <property type="match status" value="1"/>
</dbReference>
<dbReference type="SUPFAM" id="SSF81799">
    <property type="entry name" value="Putative methyltransferase TM0872, insert domain"/>
    <property type="match status" value="1"/>
</dbReference>
<dbReference type="SUPFAM" id="SSF53335">
    <property type="entry name" value="S-adenosyl-L-methionine-dependent methyltransferases"/>
    <property type="match status" value="1"/>
</dbReference>
<gene>
    <name evidence="1" type="primary">rsmH</name>
    <name type="synonym">mraW</name>
    <name type="ordered locus">Cbei_1576</name>
</gene>
<sequence length="310" mass="35313">MEFKHVSVLLNECIEALNIKENGIYVDGTLGGAGHSSHILSNLSKDGMLIGIDQDQDALKAAKEKLKDFENVKYVHSNFYNIDSILNDLDIEKVDGILMDLGVSSYQLDEASRGFSYMKDAPLDMRMNRENDFSAYNIVNNYDEDSLYKIIKDYGEERFAKRIANFIINRRIEKPIETTFELVDIIKAAIPAKMRREGPHPAKRTFQAIRIEVNSELKILNKTIEDGVNRLNKGGRMAIITFHSLEDRIVKLKFRELENPCTCPKEFPMCICGKSPLVKNIAKKGIAPTKEEIEENPRSRSAKLRVIEKL</sequence>
<keyword id="KW-0963">Cytoplasm</keyword>
<keyword id="KW-0489">Methyltransferase</keyword>
<keyword id="KW-0698">rRNA processing</keyword>
<keyword id="KW-0949">S-adenosyl-L-methionine</keyword>
<keyword id="KW-0808">Transferase</keyword>
<accession>A6LTS0</accession>
<name>RSMH_CLOB8</name>
<proteinExistence type="inferred from homology"/>
<protein>
    <recommendedName>
        <fullName evidence="1">Ribosomal RNA small subunit methyltransferase H</fullName>
        <ecNumber evidence="1">2.1.1.199</ecNumber>
    </recommendedName>
    <alternativeName>
        <fullName evidence="1">16S rRNA m(4)C1402 methyltransferase</fullName>
    </alternativeName>
    <alternativeName>
        <fullName evidence="1">rRNA (cytosine-N(4)-)-methyltransferase RsmH</fullName>
    </alternativeName>
</protein>
<evidence type="ECO:0000255" key="1">
    <source>
        <dbReference type="HAMAP-Rule" id="MF_01007"/>
    </source>
</evidence>
<reference key="1">
    <citation type="submission" date="2007-06" db="EMBL/GenBank/DDBJ databases">
        <title>Complete sequence of Clostridium beijerinckii NCIMB 8052.</title>
        <authorList>
            <consortium name="US DOE Joint Genome Institute"/>
            <person name="Copeland A."/>
            <person name="Lucas S."/>
            <person name="Lapidus A."/>
            <person name="Barry K."/>
            <person name="Detter J.C."/>
            <person name="Glavina del Rio T."/>
            <person name="Hammon N."/>
            <person name="Israni S."/>
            <person name="Dalin E."/>
            <person name="Tice H."/>
            <person name="Pitluck S."/>
            <person name="Sims D."/>
            <person name="Brettin T."/>
            <person name="Bruce D."/>
            <person name="Tapia R."/>
            <person name="Brainard J."/>
            <person name="Schmutz J."/>
            <person name="Larimer F."/>
            <person name="Land M."/>
            <person name="Hauser L."/>
            <person name="Kyrpides N."/>
            <person name="Mikhailova N."/>
            <person name="Bennet G."/>
            <person name="Cann I."/>
            <person name="Chen J.-S."/>
            <person name="Contreras A.L."/>
            <person name="Jones D."/>
            <person name="Kashket E."/>
            <person name="Mitchell W."/>
            <person name="Stoddard S."/>
            <person name="Schwarz W."/>
            <person name="Qureshi N."/>
            <person name="Young M."/>
            <person name="Shi Z."/>
            <person name="Ezeji T."/>
            <person name="White B."/>
            <person name="Blaschek H."/>
            <person name="Richardson P."/>
        </authorList>
    </citation>
    <scope>NUCLEOTIDE SEQUENCE [LARGE SCALE GENOMIC DNA]</scope>
    <source>
        <strain>ATCC 51743 / NCIMB 8052</strain>
    </source>
</reference>